<gene>
    <name evidence="4" type="primary">CBP60B</name>
    <name evidence="7" type="ORF">LOC107899061</name>
</gene>
<evidence type="ECO:0000250" key="1">
    <source>
        <dbReference type="UniProtKB" id="F4K2R6"/>
    </source>
</evidence>
<evidence type="ECO:0000256" key="2">
    <source>
        <dbReference type="SAM" id="MobiDB-lite"/>
    </source>
</evidence>
<evidence type="ECO:0000269" key="3">
    <source>
    </source>
</evidence>
<evidence type="ECO:0000303" key="4">
    <source>
    </source>
</evidence>
<evidence type="ECO:0000305" key="5"/>
<evidence type="ECO:0000312" key="6">
    <source>
        <dbReference type="Proteomes" id="UP000189702"/>
    </source>
</evidence>
<evidence type="ECO:0000312" key="7">
    <source>
        <dbReference type="RefSeq" id="XP_016680151.1"/>
    </source>
</evidence>
<accession>A0A1U8IPT1</accession>
<feature type="chain" id="PRO_0000454500" description="Calmodulin-binding protein 60 B">
    <location>
        <begin position="1"/>
        <end position="576"/>
    </location>
</feature>
<feature type="region of interest" description="Calmodulin-binding" evidence="1">
    <location>
        <begin position="1"/>
        <end position="80"/>
    </location>
</feature>
<feature type="region of interest" description="Disordered" evidence="2">
    <location>
        <begin position="1"/>
        <end position="25"/>
    </location>
</feature>
<feature type="region of interest" description="DNA-binding" evidence="1">
    <location>
        <begin position="150"/>
        <end position="273"/>
    </location>
</feature>
<feature type="compositionally biased region" description="Basic and acidic residues" evidence="2">
    <location>
        <begin position="8"/>
        <end position="25"/>
    </location>
</feature>
<protein>
    <recommendedName>
        <fullName evidence="4">Calmodulin-binding protein 60 B</fullName>
    </recommendedName>
    <alternativeName>
        <fullName evidence="4">GhCBP60B</fullName>
    </alternativeName>
</protein>
<sequence length="576" mass="65173">MMLPTKRPAPDHGDDERNEVMVPEPKRRTNLKKNIMGVGGLSFNKIVLNLEPMLRIWVHEAVEAAIRSSIHPSSRPSLNRIEASRGRRLQLRFVDKPPSTIFTGSKVEAENGNPIRIILVDATSQAMVSSGSLSSIKVEIVVLNGEFGTDERQDWTENEFNASVLREREGRRPLVTGDLNITLVDGVGTVDNVIFTDNSSWIRCRKFRLGARIVQRSAGEVTIREATSDAFMVKDHRGELYKKHYPPLLHDEVWRLERIAKDGAFHKRLAYKNVHTVKDFLRLLVTDPIALRNILGGGISNRVWETIIEHALSCVPDDDEWYTYHGTAQRVELLLNSIYNVVKVTFDGQDYLPVENLTFSQKLLVEDAKRQAYKNVWNLTPFDRRAIMGPSMPFTDLLPEPVGTSNLLLQQHDFSGTRPDMPLGLNQSSTSFSYEVENPKPLQGIEPLNPMLRNSSFRMEGIFPYNADNSFSFFADDGFGTNQDNTQAQMLSLTSATPAWAQGSGFIFTPDYETSSISFLSSFPSCNVNDRSIGETREVCPKNRWLKVRAVIQWKSISRGAAKRRRQHWLQHGICT</sequence>
<comment type="function">
    <text evidence="1 3">Transcription activator that binds DNA in a sequence-specific manner, likely 5'-GAAATTTTGG-3', to promote the expression of target genes (By similarity). Required for pathogen resistance (PubMed:29757140).</text>
</comment>
<comment type="subunit">
    <text evidence="3">(Microbial infection) Interacts with V.dahliae SCP41.</text>
</comment>
<comment type="subunit">
    <text evidence="1">Interacts with calmodulin (CaM).</text>
</comment>
<comment type="subcellular location">
    <subcellularLocation>
        <location evidence="3">Nucleus</location>
    </subcellularLocation>
</comment>
<comment type="similarity">
    <text evidence="5">Belongs to the plant ACBP60 protein family.</text>
</comment>
<dbReference type="RefSeq" id="NP_001412912.1">
    <property type="nucleotide sequence ID" value="NM_001425983.1"/>
</dbReference>
<dbReference type="RefSeq" id="XP_016680151.1">
    <property type="nucleotide sequence ID" value="XM_016824662.1"/>
</dbReference>
<dbReference type="STRING" id="3635.A0A1U8IPT1"/>
<dbReference type="PaxDb" id="3635-A0A1U8IPT1"/>
<dbReference type="GeneID" id="107899061"/>
<dbReference type="KEGG" id="ghi:107899061"/>
<dbReference type="OMA" id="HAYKNIN"/>
<dbReference type="Proteomes" id="UP000189702">
    <property type="component" value="Chromosome 17"/>
</dbReference>
<dbReference type="GO" id="GO:0005634">
    <property type="term" value="C:nucleus"/>
    <property type="evidence" value="ECO:0000314"/>
    <property type="project" value="UniProtKB"/>
</dbReference>
<dbReference type="GO" id="GO:0005516">
    <property type="term" value="F:calmodulin binding"/>
    <property type="evidence" value="ECO:0007669"/>
    <property type="project" value="UniProtKB-KW"/>
</dbReference>
<dbReference type="GO" id="GO:0003700">
    <property type="term" value="F:DNA-binding transcription factor activity"/>
    <property type="evidence" value="ECO:0000318"/>
    <property type="project" value="GO_Central"/>
</dbReference>
<dbReference type="GO" id="GO:0043565">
    <property type="term" value="F:sequence-specific DNA binding"/>
    <property type="evidence" value="ECO:0000318"/>
    <property type="project" value="GO_Central"/>
</dbReference>
<dbReference type="GO" id="GO:0098542">
    <property type="term" value="P:defense response to other organism"/>
    <property type="evidence" value="ECO:0000315"/>
    <property type="project" value="UniProtKB"/>
</dbReference>
<dbReference type="GO" id="GO:0080142">
    <property type="term" value="P:regulation of salicylic acid biosynthetic process"/>
    <property type="evidence" value="ECO:0000318"/>
    <property type="project" value="GO_Central"/>
</dbReference>
<dbReference type="InterPro" id="IPR046829">
    <property type="entry name" value="Calmod_bind_C"/>
</dbReference>
<dbReference type="InterPro" id="IPR046830">
    <property type="entry name" value="Calmod_bind_M"/>
</dbReference>
<dbReference type="InterPro" id="IPR046831">
    <property type="entry name" value="Calmodulin_bind_N"/>
</dbReference>
<dbReference type="InterPro" id="IPR012416">
    <property type="entry name" value="CBP60"/>
</dbReference>
<dbReference type="PANTHER" id="PTHR31713:SF43">
    <property type="entry name" value="CALMODULIN-BINDING PROTEIN 60 G"/>
    <property type="match status" value="1"/>
</dbReference>
<dbReference type="PANTHER" id="PTHR31713">
    <property type="entry name" value="OS02G0177800 PROTEIN"/>
    <property type="match status" value="1"/>
</dbReference>
<dbReference type="Pfam" id="PF20452">
    <property type="entry name" value="Calmod_bind_C"/>
    <property type="match status" value="1"/>
</dbReference>
<dbReference type="Pfam" id="PF20451">
    <property type="entry name" value="Calmod_bind_M"/>
    <property type="match status" value="1"/>
</dbReference>
<dbReference type="Pfam" id="PF07887">
    <property type="entry name" value="Calmodulin_bind"/>
    <property type="match status" value="1"/>
</dbReference>
<organism evidence="6">
    <name type="scientific">Gossypium hirsutum</name>
    <name type="common">Upland cotton</name>
    <name type="synonym">Gossypium mexicanum</name>
    <dbReference type="NCBI Taxonomy" id="3635"/>
    <lineage>
        <taxon>Eukaryota</taxon>
        <taxon>Viridiplantae</taxon>
        <taxon>Streptophyta</taxon>
        <taxon>Embryophyta</taxon>
        <taxon>Tracheophyta</taxon>
        <taxon>Spermatophyta</taxon>
        <taxon>Magnoliopsida</taxon>
        <taxon>eudicotyledons</taxon>
        <taxon>Gunneridae</taxon>
        <taxon>Pentapetalae</taxon>
        <taxon>rosids</taxon>
        <taxon>malvids</taxon>
        <taxon>Malvales</taxon>
        <taxon>Malvaceae</taxon>
        <taxon>Malvoideae</taxon>
        <taxon>Gossypium</taxon>
    </lineage>
</organism>
<name>CB60B_GOSHI</name>
<reference evidence="6" key="1">
    <citation type="journal article" date="2015" name="Nat. Biotechnol.">
        <title>Genome sequence of cultivated Upland cotton (Gossypium hirsutum TM-1) provides insights into genome evolution.</title>
        <authorList>
            <person name="Li F."/>
            <person name="Fan G."/>
            <person name="Lu C."/>
            <person name="Xiao G."/>
            <person name="Zou C."/>
            <person name="Kohel R.J."/>
            <person name="Ma Z."/>
            <person name="Shang H."/>
            <person name="Ma X."/>
            <person name="Wu J."/>
            <person name="Liang X."/>
            <person name="Huang G."/>
            <person name="Percy R.G."/>
            <person name="Liu K."/>
            <person name="Yang W."/>
            <person name="Chen W."/>
            <person name="Du X."/>
            <person name="Shi C."/>
            <person name="Yuan Y."/>
            <person name="Ye W."/>
            <person name="Liu X."/>
            <person name="Zhang X."/>
            <person name="Liu W."/>
            <person name="Wei H."/>
            <person name="Wei S."/>
            <person name="Huang G."/>
            <person name="Zhang X."/>
            <person name="Zhu S."/>
            <person name="Zhang H."/>
            <person name="Sun F."/>
            <person name="Wang X."/>
            <person name="Liang J."/>
            <person name="Wang J."/>
            <person name="He Q."/>
            <person name="Huang L."/>
            <person name="Wang J."/>
            <person name="Cui J."/>
            <person name="Song G."/>
            <person name="Wang K."/>
            <person name="Xu X."/>
            <person name="Yu J.Z."/>
            <person name="Zhu Y."/>
            <person name="Yu S."/>
        </authorList>
    </citation>
    <scope>NUCLEOTIDE SEQUENCE [LARGE SCALE GENOMIC DNA]</scope>
    <source>
        <strain evidence="6">cv. TM-1</strain>
    </source>
</reference>
<reference evidence="5" key="2">
    <citation type="journal article" date="2018" name="Elife">
        <title>The plant-specific transcription factors CBP60g and SARD1 are targeted by a Verticillium secretory protein VdSCP41 to modulate immunity.</title>
        <authorList>
            <person name="Qin J."/>
            <person name="Wang K."/>
            <person name="Sun L."/>
            <person name="Xing H."/>
            <person name="Wang S."/>
            <person name="Li L."/>
            <person name="Chen S."/>
            <person name="Guo H.S."/>
            <person name="Zhang J."/>
        </authorList>
    </citation>
    <scope>FUNCTION</scope>
    <scope>INTERACTION WITH V.DAHLIAE SCP41</scope>
    <scope>SUBCELLULAR LOCATION</scope>
</reference>
<proteinExistence type="evidence at protein level"/>
<keyword id="KW-0010">Activator</keyword>
<keyword id="KW-0112">Calmodulin-binding</keyword>
<keyword id="KW-0238">DNA-binding</keyword>
<keyword id="KW-0539">Nucleus</keyword>
<keyword id="KW-0611">Plant defense</keyword>
<keyword id="KW-1185">Reference proteome</keyword>
<keyword id="KW-0804">Transcription</keyword>
<keyword id="KW-0805">Transcription regulation</keyword>